<protein>
    <recommendedName>
        <fullName evidence="1">tRNA-2-methylthio-N(6)-dimethylallyladenosine synthase</fullName>
        <ecNumber evidence="1">2.8.4.3</ecNumber>
    </recommendedName>
    <alternativeName>
        <fullName evidence="1">(Dimethylallyl)adenosine tRNA methylthiotransferase MiaB</fullName>
    </alternativeName>
    <alternativeName>
        <fullName evidence="1">tRNA-i(6)A37 methylthiotransferase</fullName>
    </alternativeName>
</protein>
<keyword id="KW-0004">4Fe-4S</keyword>
<keyword id="KW-0963">Cytoplasm</keyword>
<keyword id="KW-0408">Iron</keyword>
<keyword id="KW-0411">Iron-sulfur</keyword>
<keyword id="KW-0479">Metal-binding</keyword>
<keyword id="KW-0949">S-adenosyl-L-methionine</keyword>
<keyword id="KW-0808">Transferase</keyword>
<keyword id="KW-0819">tRNA processing</keyword>
<accession>Q1CKP3</accession>
<accession>C4GR40</accession>
<name>MIAB_YERPN</name>
<feature type="chain" id="PRO_0000374659" description="tRNA-2-methylthio-N(6)-dimethylallyladenosine synthase">
    <location>
        <begin position="1"/>
        <end position="474"/>
    </location>
</feature>
<feature type="domain" description="MTTase N-terminal" evidence="1">
    <location>
        <begin position="3"/>
        <end position="120"/>
    </location>
</feature>
<feature type="domain" description="Radical SAM core" evidence="2">
    <location>
        <begin position="143"/>
        <end position="375"/>
    </location>
</feature>
<feature type="domain" description="TRAM" evidence="1">
    <location>
        <begin position="378"/>
        <end position="441"/>
    </location>
</feature>
<feature type="binding site" evidence="1">
    <location>
        <position position="12"/>
    </location>
    <ligand>
        <name>[4Fe-4S] cluster</name>
        <dbReference type="ChEBI" id="CHEBI:49883"/>
        <label>1</label>
    </ligand>
</feature>
<feature type="binding site" evidence="1">
    <location>
        <position position="49"/>
    </location>
    <ligand>
        <name>[4Fe-4S] cluster</name>
        <dbReference type="ChEBI" id="CHEBI:49883"/>
        <label>1</label>
    </ligand>
</feature>
<feature type="binding site" evidence="1">
    <location>
        <position position="83"/>
    </location>
    <ligand>
        <name>[4Fe-4S] cluster</name>
        <dbReference type="ChEBI" id="CHEBI:49883"/>
        <label>1</label>
    </ligand>
</feature>
<feature type="binding site" evidence="1">
    <location>
        <position position="157"/>
    </location>
    <ligand>
        <name>[4Fe-4S] cluster</name>
        <dbReference type="ChEBI" id="CHEBI:49883"/>
        <label>2</label>
        <note>4Fe-4S-S-AdoMet</note>
    </ligand>
</feature>
<feature type="binding site" evidence="1">
    <location>
        <position position="161"/>
    </location>
    <ligand>
        <name>[4Fe-4S] cluster</name>
        <dbReference type="ChEBI" id="CHEBI:49883"/>
        <label>2</label>
        <note>4Fe-4S-S-AdoMet</note>
    </ligand>
</feature>
<feature type="binding site" evidence="1">
    <location>
        <position position="164"/>
    </location>
    <ligand>
        <name>[4Fe-4S] cluster</name>
        <dbReference type="ChEBI" id="CHEBI:49883"/>
        <label>2</label>
        <note>4Fe-4S-S-AdoMet</note>
    </ligand>
</feature>
<evidence type="ECO:0000255" key="1">
    <source>
        <dbReference type="HAMAP-Rule" id="MF_01864"/>
    </source>
</evidence>
<evidence type="ECO:0000255" key="2">
    <source>
        <dbReference type="PROSITE-ProRule" id="PRU01266"/>
    </source>
</evidence>
<evidence type="ECO:0000305" key="3"/>
<gene>
    <name evidence="1" type="primary">miaB</name>
    <name type="ordered locus">YPN_1106</name>
    <name type="ORF">YP516_1201</name>
</gene>
<comment type="function">
    <text evidence="1">Catalyzes the methylthiolation of N6-(dimethylallyl)adenosine (i(6)A), leading to the formation of 2-methylthio-N6-(dimethylallyl)adenosine (ms(2)i(6)A) at position 37 in tRNAs that read codons beginning with uridine.</text>
</comment>
<comment type="catalytic activity">
    <reaction evidence="1">
        <text>N(6)-dimethylallyladenosine(37) in tRNA + (sulfur carrier)-SH + AH2 + 2 S-adenosyl-L-methionine = 2-methylsulfanyl-N(6)-dimethylallyladenosine(37) in tRNA + (sulfur carrier)-H + 5'-deoxyadenosine + L-methionine + A + S-adenosyl-L-homocysteine + 2 H(+)</text>
        <dbReference type="Rhea" id="RHEA:37067"/>
        <dbReference type="Rhea" id="RHEA-COMP:10375"/>
        <dbReference type="Rhea" id="RHEA-COMP:10376"/>
        <dbReference type="Rhea" id="RHEA-COMP:14737"/>
        <dbReference type="Rhea" id="RHEA-COMP:14739"/>
        <dbReference type="ChEBI" id="CHEBI:13193"/>
        <dbReference type="ChEBI" id="CHEBI:15378"/>
        <dbReference type="ChEBI" id="CHEBI:17319"/>
        <dbReference type="ChEBI" id="CHEBI:17499"/>
        <dbReference type="ChEBI" id="CHEBI:29917"/>
        <dbReference type="ChEBI" id="CHEBI:57844"/>
        <dbReference type="ChEBI" id="CHEBI:57856"/>
        <dbReference type="ChEBI" id="CHEBI:59789"/>
        <dbReference type="ChEBI" id="CHEBI:64428"/>
        <dbReference type="ChEBI" id="CHEBI:74415"/>
        <dbReference type="ChEBI" id="CHEBI:74417"/>
        <dbReference type="EC" id="2.8.4.3"/>
    </reaction>
</comment>
<comment type="cofactor">
    <cofactor evidence="1">
        <name>[4Fe-4S] cluster</name>
        <dbReference type="ChEBI" id="CHEBI:49883"/>
    </cofactor>
    <text evidence="1">Binds 2 [4Fe-4S] clusters. One cluster is coordinated with 3 cysteines and an exchangeable S-adenosyl-L-methionine.</text>
</comment>
<comment type="subunit">
    <text evidence="1">Monomer.</text>
</comment>
<comment type="subcellular location">
    <subcellularLocation>
        <location evidence="1">Cytoplasm</location>
    </subcellularLocation>
</comment>
<comment type="similarity">
    <text evidence="1">Belongs to the methylthiotransferase family. MiaB subfamily.</text>
</comment>
<comment type="sequence caution" evidence="3">
    <conflict type="erroneous initiation">
        <sequence resource="EMBL-CDS" id="ABG17437"/>
    </conflict>
</comment>
<dbReference type="EC" id="2.8.4.3" evidence="1"/>
<dbReference type="EMBL" id="CP000305">
    <property type="protein sequence ID" value="ABG17437.1"/>
    <property type="status" value="ALT_INIT"/>
    <property type="molecule type" value="Genomic_DNA"/>
</dbReference>
<dbReference type="EMBL" id="ACNQ01000008">
    <property type="protein sequence ID" value="EEO77531.1"/>
    <property type="molecule type" value="Genomic_DNA"/>
</dbReference>
<dbReference type="RefSeq" id="WP_002227875.1">
    <property type="nucleotide sequence ID" value="NZ_ACNQ01000008.1"/>
</dbReference>
<dbReference type="SMR" id="Q1CKP3"/>
<dbReference type="GeneID" id="57976075"/>
<dbReference type="KEGG" id="ypn:YPN_1106"/>
<dbReference type="HOGENOM" id="CLU_018697_2_0_6"/>
<dbReference type="Proteomes" id="UP000008936">
    <property type="component" value="Chromosome"/>
</dbReference>
<dbReference type="GO" id="GO:0005829">
    <property type="term" value="C:cytosol"/>
    <property type="evidence" value="ECO:0007669"/>
    <property type="project" value="TreeGrafter"/>
</dbReference>
<dbReference type="GO" id="GO:0051539">
    <property type="term" value="F:4 iron, 4 sulfur cluster binding"/>
    <property type="evidence" value="ECO:0007669"/>
    <property type="project" value="UniProtKB-UniRule"/>
</dbReference>
<dbReference type="GO" id="GO:0046872">
    <property type="term" value="F:metal ion binding"/>
    <property type="evidence" value="ECO:0007669"/>
    <property type="project" value="UniProtKB-KW"/>
</dbReference>
<dbReference type="GO" id="GO:0035597">
    <property type="term" value="F:N6-isopentenyladenosine methylthiotransferase activity"/>
    <property type="evidence" value="ECO:0007669"/>
    <property type="project" value="TreeGrafter"/>
</dbReference>
<dbReference type="CDD" id="cd01335">
    <property type="entry name" value="Radical_SAM"/>
    <property type="match status" value="1"/>
</dbReference>
<dbReference type="FunFam" id="3.40.50.12160:FF:000001">
    <property type="entry name" value="tRNA-2-methylthio-N(6)-dimethylallyladenosine synthase"/>
    <property type="match status" value="1"/>
</dbReference>
<dbReference type="FunFam" id="3.80.30.20:FF:000001">
    <property type="entry name" value="tRNA-2-methylthio-N(6)-dimethylallyladenosine synthase 2"/>
    <property type="match status" value="1"/>
</dbReference>
<dbReference type="Gene3D" id="3.40.50.12160">
    <property type="entry name" value="Methylthiotransferase, N-terminal domain"/>
    <property type="match status" value="1"/>
</dbReference>
<dbReference type="Gene3D" id="3.80.30.20">
    <property type="entry name" value="tm_1862 like domain"/>
    <property type="match status" value="1"/>
</dbReference>
<dbReference type="HAMAP" id="MF_01864">
    <property type="entry name" value="tRNA_metthiotr_MiaB"/>
    <property type="match status" value="1"/>
</dbReference>
<dbReference type="InterPro" id="IPR006638">
    <property type="entry name" value="Elp3/MiaA/NifB-like_rSAM"/>
</dbReference>
<dbReference type="InterPro" id="IPR005839">
    <property type="entry name" value="Methylthiotransferase"/>
</dbReference>
<dbReference type="InterPro" id="IPR020612">
    <property type="entry name" value="Methylthiotransferase_CS"/>
</dbReference>
<dbReference type="InterPro" id="IPR013848">
    <property type="entry name" value="Methylthiotransferase_N"/>
</dbReference>
<dbReference type="InterPro" id="IPR038135">
    <property type="entry name" value="Methylthiotransferase_N_sf"/>
</dbReference>
<dbReference type="InterPro" id="IPR006463">
    <property type="entry name" value="MiaB_methiolase"/>
</dbReference>
<dbReference type="InterPro" id="IPR007197">
    <property type="entry name" value="rSAM"/>
</dbReference>
<dbReference type="InterPro" id="IPR023404">
    <property type="entry name" value="rSAM_horseshoe"/>
</dbReference>
<dbReference type="InterPro" id="IPR002792">
    <property type="entry name" value="TRAM_dom"/>
</dbReference>
<dbReference type="NCBIfam" id="TIGR01574">
    <property type="entry name" value="miaB-methiolase"/>
    <property type="match status" value="1"/>
</dbReference>
<dbReference type="NCBIfam" id="TIGR00089">
    <property type="entry name" value="MiaB/RimO family radical SAM methylthiotransferase"/>
    <property type="match status" value="1"/>
</dbReference>
<dbReference type="PANTHER" id="PTHR43020">
    <property type="entry name" value="CDK5 REGULATORY SUBUNIT-ASSOCIATED PROTEIN 1"/>
    <property type="match status" value="1"/>
</dbReference>
<dbReference type="PANTHER" id="PTHR43020:SF2">
    <property type="entry name" value="MITOCHONDRIAL TRNA METHYLTHIOTRANSFERASE CDK5RAP1"/>
    <property type="match status" value="1"/>
</dbReference>
<dbReference type="Pfam" id="PF04055">
    <property type="entry name" value="Radical_SAM"/>
    <property type="match status" value="1"/>
</dbReference>
<dbReference type="Pfam" id="PF01938">
    <property type="entry name" value="TRAM"/>
    <property type="match status" value="1"/>
</dbReference>
<dbReference type="Pfam" id="PF00919">
    <property type="entry name" value="UPF0004"/>
    <property type="match status" value="1"/>
</dbReference>
<dbReference type="SFLD" id="SFLDF00273">
    <property type="entry name" value="(dimethylallyl)adenosine_tRNA"/>
    <property type="match status" value="1"/>
</dbReference>
<dbReference type="SFLD" id="SFLDG01082">
    <property type="entry name" value="B12-binding_domain_containing"/>
    <property type="match status" value="1"/>
</dbReference>
<dbReference type="SFLD" id="SFLDS00029">
    <property type="entry name" value="Radical_SAM"/>
    <property type="match status" value="1"/>
</dbReference>
<dbReference type="SMART" id="SM00729">
    <property type="entry name" value="Elp3"/>
    <property type="match status" value="1"/>
</dbReference>
<dbReference type="SUPFAM" id="SSF102114">
    <property type="entry name" value="Radical SAM enzymes"/>
    <property type="match status" value="1"/>
</dbReference>
<dbReference type="PROSITE" id="PS51449">
    <property type="entry name" value="MTTASE_N"/>
    <property type="match status" value="1"/>
</dbReference>
<dbReference type="PROSITE" id="PS01278">
    <property type="entry name" value="MTTASE_RADICAL"/>
    <property type="match status" value="1"/>
</dbReference>
<dbReference type="PROSITE" id="PS51918">
    <property type="entry name" value="RADICAL_SAM"/>
    <property type="match status" value="1"/>
</dbReference>
<dbReference type="PROSITE" id="PS50926">
    <property type="entry name" value="TRAM"/>
    <property type="match status" value="1"/>
</dbReference>
<sequence length="474" mass="53405">MTKKLHIKTWGCQMNEYDSSKMADLLASTHGYQLTTIPEEADLLLLNTCSIREKAQEKVFSLLGQWKLLKEKNPQLIIGVGGCVASQEGEQLRQRAPCVDVIFGPQTLHRLPEMINHVQGTNSPVVDISFPEIEKFDRLPEPRAEGPTAFVSIMEGCNKYCTFCVVPYTRGEEVSRPSDDILFEIAQLAAQGVREVNLLGQNVNAYRGATYDGDICSFAELLRLVAAIDGIDRVRFTTSHPIEFTDDIIDVYRDTPELVSFLHLPVQSGSDRILTMMKRAHTALEYKAIIRKLRQARPDIQISSDFIVGFPGETQQDFEQTMKLVADIHFDTSYSFIYSPRPGTPAADLPNNVSEEEKKQRLHILQQRISQQAMEISRKMVGTVQRVLVEGTSRKNVMELAGRTENNRVVNFEGSPDMIGKFVDVEIVNVYASSLRGILLRTEDQMDLRTHESPQSVIARTRKENEIGVGIYQP</sequence>
<organism>
    <name type="scientific">Yersinia pestis bv. Antiqua (strain Nepal516)</name>
    <dbReference type="NCBI Taxonomy" id="377628"/>
    <lineage>
        <taxon>Bacteria</taxon>
        <taxon>Pseudomonadati</taxon>
        <taxon>Pseudomonadota</taxon>
        <taxon>Gammaproteobacteria</taxon>
        <taxon>Enterobacterales</taxon>
        <taxon>Yersiniaceae</taxon>
        <taxon>Yersinia</taxon>
    </lineage>
</organism>
<proteinExistence type="inferred from homology"/>
<reference key="1">
    <citation type="journal article" date="2006" name="J. Bacteriol.">
        <title>Complete genome sequence of Yersinia pestis strains Antiqua and Nepal516: evidence of gene reduction in an emerging pathogen.</title>
        <authorList>
            <person name="Chain P.S.G."/>
            <person name="Hu P."/>
            <person name="Malfatti S.A."/>
            <person name="Radnedge L."/>
            <person name="Larimer F."/>
            <person name="Vergez L.M."/>
            <person name="Worsham P."/>
            <person name="Chu M.C."/>
            <person name="Andersen G.L."/>
        </authorList>
    </citation>
    <scope>NUCLEOTIDE SEQUENCE [LARGE SCALE GENOMIC DNA]</scope>
    <source>
        <strain>Nepal516</strain>
    </source>
</reference>
<reference key="2">
    <citation type="submission" date="2009-04" db="EMBL/GenBank/DDBJ databases">
        <title>Yersinia pestis Nepal516A whole genome shotgun sequencing project.</title>
        <authorList>
            <person name="Plunkett G. III"/>
            <person name="Anderson B.D."/>
            <person name="Baumler D.J."/>
            <person name="Burland V."/>
            <person name="Cabot E.L."/>
            <person name="Glasner J.D."/>
            <person name="Mau B."/>
            <person name="Neeno-Eckwall E."/>
            <person name="Perna N.T."/>
            <person name="Munk A.C."/>
            <person name="Tapia R."/>
            <person name="Green L.D."/>
            <person name="Rogers Y.C."/>
            <person name="Detter J.C."/>
            <person name="Bruce D.C."/>
            <person name="Brettin T.S."/>
        </authorList>
    </citation>
    <scope>NUCLEOTIDE SEQUENCE [LARGE SCALE GENOMIC DNA]</scope>
    <source>
        <strain>Nepal516</strain>
    </source>
</reference>